<protein>
    <recommendedName>
        <fullName>NACHT, LRR and PYD domains-containing protein 4E</fullName>
    </recommendedName>
    <alternativeName>
        <fullName>NALP-epsilon</fullName>
    </alternativeName>
</protein>
<evidence type="ECO:0000250" key="1"/>
<evidence type="ECO:0000255" key="2">
    <source>
        <dbReference type="PROSITE-ProRule" id="PRU00061"/>
    </source>
</evidence>
<evidence type="ECO:0000255" key="3">
    <source>
        <dbReference type="PROSITE-ProRule" id="PRU00136"/>
    </source>
</evidence>
<evidence type="ECO:0000305" key="4"/>
<organism>
    <name type="scientific">Mus musculus</name>
    <name type="common">Mouse</name>
    <dbReference type="NCBI Taxonomy" id="10090"/>
    <lineage>
        <taxon>Eukaryota</taxon>
        <taxon>Metazoa</taxon>
        <taxon>Chordata</taxon>
        <taxon>Craniata</taxon>
        <taxon>Vertebrata</taxon>
        <taxon>Euteleostomi</taxon>
        <taxon>Mammalia</taxon>
        <taxon>Eutheria</taxon>
        <taxon>Euarchontoglires</taxon>
        <taxon>Glires</taxon>
        <taxon>Rodentia</taxon>
        <taxon>Myomorpha</taxon>
        <taxon>Muroidea</taxon>
        <taxon>Muridae</taxon>
        <taxon>Murinae</taxon>
        <taxon>Mus</taxon>
        <taxon>Mus</taxon>
    </lineage>
</organism>
<proteinExistence type="evidence at transcript level"/>
<name>NAL4E_MOUSE</name>
<feature type="chain" id="PRO_0000286332" description="NACHT, LRR and PYD domains-containing protein 4E">
    <location>
        <begin position="1"/>
        <end position="978"/>
    </location>
</feature>
<feature type="domain" description="Pyrin" evidence="2">
    <location>
        <begin position="1"/>
        <end position="93"/>
    </location>
</feature>
<feature type="domain" description="NACHT" evidence="3">
    <location>
        <begin position="148"/>
        <end position="471"/>
    </location>
</feature>
<feature type="repeat" description="LRR 1">
    <location>
        <begin position="594"/>
        <end position="617"/>
    </location>
</feature>
<feature type="repeat" description="LRR 2">
    <location>
        <begin position="694"/>
        <end position="717"/>
    </location>
</feature>
<feature type="repeat" description="LRR 3">
    <location>
        <begin position="746"/>
        <end position="773"/>
    </location>
</feature>
<feature type="repeat" description="LRR 4">
    <location>
        <begin position="802"/>
        <end position="825"/>
    </location>
</feature>
<feature type="repeat" description="LRR 5">
    <location>
        <begin position="859"/>
        <end position="882"/>
    </location>
</feature>
<feature type="repeat" description="LRR 6">
    <location>
        <begin position="916"/>
        <end position="940"/>
    </location>
</feature>
<feature type="binding site" evidence="3">
    <location>
        <begin position="154"/>
        <end position="161"/>
    </location>
    <ligand>
        <name>ATP</name>
        <dbReference type="ChEBI" id="CHEBI:30616"/>
    </ligand>
</feature>
<feature type="sequence conflict" description="In Ref. 1; AAU06318." evidence="4" ref="1">
    <original>E</original>
    <variation>G</variation>
    <location>
        <position position="135"/>
    </location>
</feature>
<feature type="sequence conflict" description="In Ref. 1; AAU06318." evidence="4" ref="1">
    <original>C</original>
    <variation>S</variation>
    <location>
        <position position="590"/>
    </location>
</feature>
<sequence>MASFFSDFGLMWYLEELNKKEFMKFKELLQQEILQLGLKHISWTEVKKASREDLANLLLKHYEEKKAWDMTFKIFQKMNRQDLMERAGREIAGHSKLYQVHLKKKLTHDYARKFNIKDQDSLKQKFTQDDCDHFENLLISKATGKKPHMVFLQGVAGIGKSLMLTKLMLAWSEGMVFQNKFSYIFYFCCQDVKKMKRASLAELISKEWPNASAPIEEILSQPEKLLFVIDNLEVMECDMSEWESELCDDCMEKQPVNILMSSLLRRKMLPESSFLVSATPETFEKIEDRIECTNVKMMAGFNESSIKVYFYSLFQDRNRTQEIFSLVRENEQLFSVCQVPVLCWMVATCLKKEIEKGRDPVSICRRITSLYTTYIFNLFIPHSAQYPSKKSQDQLQGLCSLAAEGMWTDTFVFAEEALRRNGIMDSDISTLLDVRILEKSKESEKSYIFLHPSIQEVCAAIFHLLKSHVDHPSQDVKSIEALIFTFLKKVKIQWIFFGSFIFGLLHESEQKKLEAFFGHQLSQEIKRQLYQCLETISGNKELQEQIDGMKLFYCLFEMDDEAFLPQVMNCMEQIKFVAKDYSDVIVAAHCLQHCSTLKKLSLSTQNILSEGQEHSYTEKLLICWHHVCSVLTSSKDIHVLQVKDTNFNERAFLVLYSHLKYPSCILKVLEVNNVTLLCDNRLLFELIQNQRLQLLNLSLTFLSHNDVKLLCDVLNQAECNIEKLMVADCNLSPDDCKVFVSVLISSKMLKHLNLSSNNLDKGISSLSKALCHPDCVLKNLVLAKCSLSEECWHYLSEVLRRNKTLTHLDISFNDLKDEGLKVLCGALTLPDSVLISLSVRYCLITTSGCQDLAEVLRNNQNLRNLQISNNKIEDAGVKLLCDAIKHPNCHLENIGLEACALTGACCEDLASSFTHCKTLLGINLQENALDHSGLVALFEAMKQQQCTVNLRGLRITDFDKETQEFLMAEKEKNPYLSI</sequence>
<reference key="1">
    <citation type="journal article" date="2004" name="Hum. Mol. Genet.">
        <title>Age-associated alteration of gene expression patterns in mouse oocytes.</title>
        <authorList>
            <person name="Hamatani T."/>
            <person name="Falco G."/>
            <person name="Carter M.G."/>
            <person name="Akutsu H."/>
            <person name="Stagg C.A."/>
            <person name="Sharov A.A."/>
            <person name="Dudekula D.B."/>
            <person name="VanBuren V."/>
            <person name="Ko M.S.H."/>
        </authorList>
    </citation>
    <scope>NUCLEOTIDE SEQUENCE [MRNA]</scope>
    <source>
        <strain>C57BL/6J</strain>
    </source>
</reference>
<reference key="2">
    <citation type="journal article" date="2009" name="PLoS Biol.">
        <title>Lineage-specific biology revealed by a finished genome assembly of the mouse.</title>
        <authorList>
            <person name="Church D.M."/>
            <person name="Goodstadt L."/>
            <person name="Hillier L.W."/>
            <person name="Zody M.C."/>
            <person name="Goldstein S."/>
            <person name="She X."/>
            <person name="Bult C.J."/>
            <person name="Agarwala R."/>
            <person name="Cherry J.L."/>
            <person name="DiCuccio M."/>
            <person name="Hlavina W."/>
            <person name="Kapustin Y."/>
            <person name="Meric P."/>
            <person name="Maglott D."/>
            <person name="Birtle Z."/>
            <person name="Marques A.C."/>
            <person name="Graves T."/>
            <person name="Zhou S."/>
            <person name="Teague B."/>
            <person name="Potamousis K."/>
            <person name="Churas C."/>
            <person name="Place M."/>
            <person name="Herschleb J."/>
            <person name="Runnheim R."/>
            <person name="Forrest D."/>
            <person name="Amos-Landgraf J."/>
            <person name="Schwartz D.C."/>
            <person name="Cheng Z."/>
            <person name="Lindblad-Toh K."/>
            <person name="Eichler E.E."/>
            <person name="Ponting C.P."/>
        </authorList>
    </citation>
    <scope>NUCLEOTIDE SEQUENCE [LARGE SCALE GENOMIC DNA]</scope>
    <source>
        <strain>C57BL/6J</strain>
    </source>
</reference>
<dbReference type="EMBL" id="AY596197">
    <property type="protein sequence ID" value="AAU06318.1"/>
    <property type="molecule type" value="mRNA"/>
</dbReference>
<dbReference type="EMBL" id="AC150900">
    <property type="status" value="NOT_ANNOTATED_CDS"/>
    <property type="molecule type" value="Genomic_DNA"/>
</dbReference>
<dbReference type="CCDS" id="CCDS20928.1"/>
<dbReference type="RefSeq" id="NP_001004194.2">
    <property type="nucleotide sequence ID" value="NM_001004194.2"/>
</dbReference>
<dbReference type="SMR" id="Q66X19"/>
<dbReference type="FunCoup" id="Q66X19">
    <property type="interactions" value="206"/>
</dbReference>
<dbReference type="STRING" id="10090.ENSMUSP00000075794"/>
<dbReference type="PaxDb" id="10090-ENSMUSP00000075794"/>
<dbReference type="ProteomicsDB" id="287433"/>
<dbReference type="DNASU" id="446099"/>
<dbReference type="Ensembl" id="ENSMUST00000076470.5">
    <property type="protein sequence ID" value="ENSMUSP00000075794.4"/>
    <property type="gene ID" value="ENSMUSG00000045693.9"/>
</dbReference>
<dbReference type="GeneID" id="446099"/>
<dbReference type="KEGG" id="mmu:446099"/>
<dbReference type="UCSC" id="uc009fod.2">
    <property type="organism name" value="mouse"/>
</dbReference>
<dbReference type="AGR" id="MGI:3056600"/>
<dbReference type="CTD" id="446099"/>
<dbReference type="MGI" id="MGI:3056600">
    <property type="gene designation" value="Nlrp4e"/>
</dbReference>
<dbReference type="VEuPathDB" id="HostDB:ENSMUSG00000045693"/>
<dbReference type="eggNOG" id="ENOG502SGVH">
    <property type="taxonomic scope" value="Eukaryota"/>
</dbReference>
<dbReference type="GeneTree" id="ENSGT00940000162284"/>
<dbReference type="HOGENOM" id="CLU_002274_2_1_1"/>
<dbReference type="InParanoid" id="Q66X19"/>
<dbReference type="OMA" id="MAGFNES"/>
<dbReference type="OrthoDB" id="39091at9989"/>
<dbReference type="PhylomeDB" id="Q66X19"/>
<dbReference type="BioGRID-ORCS" id="446099">
    <property type="hits" value="2 hits in 76 CRISPR screens"/>
</dbReference>
<dbReference type="ChiTaRS" id="Nlrp4e">
    <property type="organism name" value="mouse"/>
</dbReference>
<dbReference type="PRO" id="PR:Q66X19"/>
<dbReference type="Proteomes" id="UP000000589">
    <property type="component" value="Chromosome 7"/>
</dbReference>
<dbReference type="RNAct" id="Q66X19">
    <property type="molecule type" value="protein"/>
</dbReference>
<dbReference type="Bgee" id="ENSMUSG00000045693">
    <property type="expression patterns" value="Expressed in animal zygote and 11 other cell types or tissues"/>
</dbReference>
<dbReference type="GO" id="GO:0005524">
    <property type="term" value="F:ATP binding"/>
    <property type="evidence" value="ECO:0007669"/>
    <property type="project" value="UniProtKB-KW"/>
</dbReference>
<dbReference type="GO" id="GO:0006954">
    <property type="term" value="P:inflammatory response"/>
    <property type="evidence" value="ECO:0007669"/>
    <property type="project" value="UniProtKB-KW"/>
</dbReference>
<dbReference type="CDD" id="cd08320">
    <property type="entry name" value="Pyrin_NALPs"/>
    <property type="match status" value="1"/>
</dbReference>
<dbReference type="FunFam" id="1.10.533.10:FF:000056">
    <property type="entry name" value="NACHT, LRR and PYD domains-containing protein 14"/>
    <property type="match status" value="1"/>
</dbReference>
<dbReference type="FunFam" id="3.40.50.300:FF:000442">
    <property type="entry name" value="NACHT, LRR and PYD domains-containing protein 3"/>
    <property type="match status" value="1"/>
</dbReference>
<dbReference type="Gene3D" id="1.10.533.10">
    <property type="entry name" value="Death Domain, Fas"/>
    <property type="match status" value="1"/>
</dbReference>
<dbReference type="Gene3D" id="3.40.50.300">
    <property type="entry name" value="P-loop containing nucleotide triphosphate hydrolases"/>
    <property type="match status" value="1"/>
</dbReference>
<dbReference type="Gene3D" id="3.80.10.10">
    <property type="entry name" value="Ribonuclease Inhibitor"/>
    <property type="match status" value="2"/>
</dbReference>
<dbReference type="InterPro" id="IPR004020">
    <property type="entry name" value="DAPIN"/>
</dbReference>
<dbReference type="InterPro" id="IPR011029">
    <property type="entry name" value="DEATH-like_dom_sf"/>
</dbReference>
<dbReference type="InterPro" id="IPR001611">
    <property type="entry name" value="Leu-rich_rpt"/>
</dbReference>
<dbReference type="InterPro" id="IPR032675">
    <property type="entry name" value="LRR_dom_sf"/>
</dbReference>
<dbReference type="InterPro" id="IPR007111">
    <property type="entry name" value="NACHT_NTPase"/>
</dbReference>
<dbReference type="InterPro" id="IPR041267">
    <property type="entry name" value="NLRP_HD2"/>
</dbReference>
<dbReference type="InterPro" id="IPR050637">
    <property type="entry name" value="NLRP_innate_immun_reg"/>
</dbReference>
<dbReference type="InterPro" id="IPR041075">
    <property type="entry name" value="NOD1/2_WH"/>
</dbReference>
<dbReference type="InterPro" id="IPR027417">
    <property type="entry name" value="P-loop_NTPase"/>
</dbReference>
<dbReference type="PANTHER" id="PTHR45690">
    <property type="entry name" value="NACHT, LRR AND PYD DOMAINS-CONTAINING PROTEIN 12"/>
    <property type="match status" value="1"/>
</dbReference>
<dbReference type="PANTHER" id="PTHR45690:SF6">
    <property type="entry name" value="NACHT, LRR AND PYD DOMAINS-CONTAINING PROTEIN 4"/>
    <property type="match status" value="1"/>
</dbReference>
<dbReference type="Pfam" id="PF13516">
    <property type="entry name" value="LRR_6"/>
    <property type="match status" value="3"/>
</dbReference>
<dbReference type="Pfam" id="PF05729">
    <property type="entry name" value="NACHT"/>
    <property type="match status" value="1"/>
</dbReference>
<dbReference type="Pfam" id="PF17776">
    <property type="entry name" value="NLRC4_HD2"/>
    <property type="match status" value="1"/>
</dbReference>
<dbReference type="Pfam" id="PF17779">
    <property type="entry name" value="NOD2_WH"/>
    <property type="match status" value="1"/>
</dbReference>
<dbReference type="Pfam" id="PF02758">
    <property type="entry name" value="PYRIN"/>
    <property type="match status" value="1"/>
</dbReference>
<dbReference type="SMART" id="SM00368">
    <property type="entry name" value="LRR_RI"/>
    <property type="match status" value="9"/>
</dbReference>
<dbReference type="SMART" id="SM01289">
    <property type="entry name" value="PYRIN"/>
    <property type="match status" value="1"/>
</dbReference>
<dbReference type="SUPFAM" id="SSF47986">
    <property type="entry name" value="DEATH domain"/>
    <property type="match status" value="1"/>
</dbReference>
<dbReference type="SUPFAM" id="SSF52540">
    <property type="entry name" value="P-loop containing nucleoside triphosphate hydrolases"/>
    <property type="match status" value="1"/>
</dbReference>
<dbReference type="SUPFAM" id="SSF52047">
    <property type="entry name" value="RNI-like"/>
    <property type="match status" value="1"/>
</dbReference>
<dbReference type="PROSITE" id="PS50824">
    <property type="entry name" value="DAPIN"/>
    <property type="match status" value="1"/>
</dbReference>
<dbReference type="PROSITE" id="PS51450">
    <property type="entry name" value="LRR"/>
    <property type="match status" value="4"/>
</dbReference>
<dbReference type="PROSITE" id="PS50837">
    <property type="entry name" value="NACHT"/>
    <property type="match status" value="1"/>
</dbReference>
<comment type="function">
    <text evidence="1">May be involved in inflammation and recognition of cytosolic pathogen-associated molecular patterns (PAMPs) not intercepted by membrane-bound receptors.</text>
</comment>
<comment type="similarity">
    <text evidence="4">Belongs to the NLRP family.</text>
</comment>
<gene>
    <name type="primary">Nlrp4e</name>
    <name type="synonym">Nalp4e</name>
    <name type="synonym">Nlrp4</name>
</gene>
<accession>Q66X19</accession>
<keyword id="KW-0067">ATP-binding</keyword>
<keyword id="KW-0395">Inflammatory response</keyword>
<keyword id="KW-0433">Leucine-rich repeat</keyword>
<keyword id="KW-0547">Nucleotide-binding</keyword>
<keyword id="KW-1185">Reference proteome</keyword>
<keyword id="KW-0677">Repeat</keyword>